<name>COX11_YEAST</name>
<gene>
    <name type="primary">COX11</name>
    <name type="ordered locus">YPL132W</name>
    <name type="ORF">LPI13W</name>
</gene>
<evidence type="ECO:0000250" key="1"/>
<evidence type="ECO:0000255" key="2"/>
<evidence type="ECO:0000269" key="3">
    <source>
    </source>
</evidence>
<evidence type="ECO:0000305" key="4"/>
<feature type="transit peptide" description="Mitochondrion" evidence="2">
    <location>
        <begin position="1"/>
        <end status="unknown"/>
    </location>
</feature>
<feature type="chain" id="PRO_0000006082" description="Cytochrome c oxidase assembly protein COX11, mitochondrial">
    <location>
        <begin status="unknown"/>
        <end position="300"/>
    </location>
</feature>
<feature type="topological domain" description="Mitochondrial matrix" evidence="2">
    <location>
        <begin status="unknown"/>
        <end position="84"/>
    </location>
</feature>
<feature type="transmembrane region" description="Helical" evidence="2">
    <location>
        <begin position="85"/>
        <end position="105"/>
    </location>
</feature>
<feature type="topological domain" description="Mitochondrial intermembrane" evidence="2">
    <location>
        <begin position="106"/>
        <end position="300"/>
    </location>
</feature>
<feature type="sequence conflict" description="In Ref. 3; CAA39263." evidence="4" ref="3">
    <original>WLAPHALA</original>
    <variation>MVGTSCAS</variation>
    <location>
        <begin position="24"/>
        <end position="31"/>
    </location>
</feature>
<feature type="sequence conflict" description="In Ref. 3; CAA39263 and 4; AAA35235." evidence="4" ref="3 4">
    <original>T</original>
    <variation>S</variation>
    <location>
        <position position="146"/>
    </location>
</feature>
<dbReference type="EMBL" id="U43703">
    <property type="protein sequence ID" value="AAB68227.1"/>
    <property type="molecule type" value="Genomic_DNA"/>
</dbReference>
<dbReference type="EMBL" id="X55731">
    <property type="protein sequence ID" value="CAA39263.1"/>
    <property type="molecule type" value="Genomic_DNA"/>
</dbReference>
<dbReference type="EMBL" id="M94864">
    <property type="protein sequence ID" value="AAA35235.1"/>
    <property type="molecule type" value="Genomic_DNA"/>
</dbReference>
<dbReference type="EMBL" id="BK006949">
    <property type="protein sequence ID" value="DAA11301.1"/>
    <property type="molecule type" value="Genomic_DNA"/>
</dbReference>
<dbReference type="PIR" id="S69052">
    <property type="entry name" value="S69052"/>
</dbReference>
<dbReference type="RefSeq" id="NP_015193.1">
    <property type="nucleotide sequence ID" value="NM_001183946.1"/>
</dbReference>
<dbReference type="SMR" id="P19516"/>
<dbReference type="BioGRID" id="36049">
    <property type="interactions" value="70"/>
</dbReference>
<dbReference type="DIP" id="DIP-7497N"/>
<dbReference type="FunCoup" id="P19516">
    <property type="interactions" value="641"/>
</dbReference>
<dbReference type="IntAct" id="P19516">
    <property type="interactions" value="3"/>
</dbReference>
<dbReference type="MINT" id="P19516"/>
<dbReference type="STRING" id="4932.YPL132W"/>
<dbReference type="TCDB" id="3.D.4.8.1">
    <property type="family name" value="the proton-translocating cytochrome oxidase (cox) superfamily"/>
</dbReference>
<dbReference type="iPTMnet" id="P19516"/>
<dbReference type="PaxDb" id="4932-YPL132W"/>
<dbReference type="PeptideAtlas" id="P19516"/>
<dbReference type="EnsemblFungi" id="YPL132W_mRNA">
    <property type="protein sequence ID" value="YPL132W"/>
    <property type="gene ID" value="YPL132W"/>
</dbReference>
<dbReference type="GeneID" id="855971"/>
<dbReference type="KEGG" id="sce:YPL132W"/>
<dbReference type="AGR" id="SGD:S000006053"/>
<dbReference type="SGD" id="S000006053">
    <property type="gene designation" value="COX11"/>
</dbReference>
<dbReference type="VEuPathDB" id="FungiDB:YPL132W"/>
<dbReference type="eggNOG" id="KOG2540">
    <property type="taxonomic scope" value="Eukaryota"/>
</dbReference>
<dbReference type="GeneTree" id="ENSGT00390000007512"/>
<dbReference type="HOGENOM" id="CLU_045000_0_1_1"/>
<dbReference type="InParanoid" id="P19516"/>
<dbReference type="OMA" id="YRIFCQS"/>
<dbReference type="OrthoDB" id="1704689at2759"/>
<dbReference type="BioCyc" id="YEAST:G3O-34031-MONOMER"/>
<dbReference type="BioGRID-ORCS" id="855971">
    <property type="hits" value="4 hits in 10 CRISPR screens"/>
</dbReference>
<dbReference type="PRO" id="PR:P19516"/>
<dbReference type="Proteomes" id="UP000002311">
    <property type="component" value="Chromosome XVI"/>
</dbReference>
<dbReference type="RNAct" id="P19516">
    <property type="molecule type" value="protein"/>
</dbReference>
<dbReference type="GO" id="GO:0005740">
    <property type="term" value="C:mitochondrial envelope"/>
    <property type="evidence" value="ECO:0000314"/>
    <property type="project" value="SGD"/>
</dbReference>
<dbReference type="GO" id="GO:0005743">
    <property type="term" value="C:mitochondrial inner membrane"/>
    <property type="evidence" value="ECO:0000314"/>
    <property type="project" value="SGD"/>
</dbReference>
<dbReference type="GO" id="GO:0005758">
    <property type="term" value="C:mitochondrial intermembrane space"/>
    <property type="evidence" value="ECO:0000314"/>
    <property type="project" value="SGD"/>
</dbReference>
<dbReference type="GO" id="GO:0005761">
    <property type="term" value="C:mitochondrial ribosome"/>
    <property type="evidence" value="ECO:0000314"/>
    <property type="project" value="SGD"/>
</dbReference>
<dbReference type="GO" id="GO:0005739">
    <property type="term" value="C:mitochondrion"/>
    <property type="evidence" value="ECO:0000314"/>
    <property type="project" value="SGD"/>
</dbReference>
<dbReference type="GO" id="GO:0005507">
    <property type="term" value="F:copper ion binding"/>
    <property type="evidence" value="ECO:0000314"/>
    <property type="project" value="SGD"/>
</dbReference>
<dbReference type="GO" id="GO:0009060">
    <property type="term" value="P:aerobic respiration"/>
    <property type="evidence" value="ECO:0000315"/>
    <property type="project" value="SGD"/>
</dbReference>
<dbReference type="GO" id="GO:0045454">
    <property type="term" value="P:cell redox homeostasis"/>
    <property type="evidence" value="ECO:0000315"/>
    <property type="project" value="SGD"/>
</dbReference>
<dbReference type="GO" id="GO:0033617">
    <property type="term" value="P:mitochondrial cytochrome c oxidase assembly"/>
    <property type="evidence" value="ECO:0000315"/>
    <property type="project" value="FlyBase"/>
</dbReference>
<dbReference type="GO" id="GO:0065003">
    <property type="term" value="P:protein-containing complex assembly"/>
    <property type="evidence" value="ECO:0000315"/>
    <property type="project" value="SGD"/>
</dbReference>
<dbReference type="FunFam" id="2.60.370.10:FF:000001">
    <property type="entry name" value="COX11 cytochrome c oxidase assembly homolog"/>
    <property type="match status" value="1"/>
</dbReference>
<dbReference type="Gene3D" id="2.60.370.10">
    <property type="entry name" value="Ctag/Cox11"/>
    <property type="match status" value="1"/>
</dbReference>
<dbReference type="HAMAP" id="MF_00155">
    <property type="entry name" value="CtaG"/>
    <property type="match status" value="1"/>
</dbReference>
<dbReference type="InterPro" id="IPR023471">
    <property type="entry name" value="CtaG/Cox11_dom_sf"/>
</dbReference>
<dbReference type="InterPro" id="IPR007533">
    <property type="entry name" value="Cyt_c_oxidase_assmbl_CtaG"/>
</dbReference>
<dbReference type="NCBIfam" id="NF003465">
    <property type="entry name" value="PRK05089.1"/>
    <property type="match status" value="1"/>
</dbReference>
<dbReference type="PANTHER" id="PTHR21320:SF3">
    <property type="entry name" value="CYTOCHROME C OXIDASE ASSEMBLY PROTEIN COX11, MITOCHONDRIAL-RELATED"/>
    <property type="match status" value="1"/>
</dbReference>
<dbReference type="PANTHER" id="PTHR21320">
    <property type="entry name" value="CYTOCHROME C OXIDASE ASSEMBLY PROTEIN COX11-RELATED"/>
    <property type="match status" value="1"/>
</dbReference>
<dbReference type="Pfam" id="PF04442">
    <property type="entry name" value="CtaG_Cox11"/>
    <property type="match status" value="1"/>
</dbReference>
<dbReference type="SUPFAM" id="SSF110111">
    <property type="entry name" value="Ctag/Cox11"/>
    <property type="match status" value="1"/>
</dbReference>
<sequence>MIRICPIVRSKVPLLGTFLRSDSWLAPHALALRRAICKNVALRSYSVNSEQPKHTFDISKLTRNEIQQLRELKRARERKFKDRTVAFYFSSVAVLFLGLAYAAVPLYRAICARTGFGGIPITDRRKFTDDKLIPVDTEKRIRISFTSEVSQILPWKFVPQQREVYVLPGETALAFYKAKNYSDKDIIGMATYSIAPGEAAQYFNKIQCFCFEEQKLAAGEEIDMPVFFFIDPDFASDPAMRNIDDIILHYTFFRAHYGDGTAVSDSKKEPEMNADEKAASLANAAILSPEVIDTRKDNSN</sequence>
<comment type="function">
    <text evidence="1">Exerts its effect at some terminal stage of cytochrome c oxidase synthesis, probably by being involved in the insertion of the copper B into subunit I.</text>
</comment>
<comment type="subcellular location">
    <subcellularLocation>
        <location>Mitochondrion inner membrane</location>
        <topology>Single-pass membrane protein</topology>
        <orientation evidence="3">Intermembrane side</orientation>
    </subcellularLocation>
    <text>Intrinsic component of the inner-membrane.</text>
</comment>
<comment type="similarity">
    <text evidence="4">Belongs to the COX11/CtaG family.</text>
</comment>
<protein>
    <recommendedName>
        <fullName>Cytochrome c oxidase assembly protein COX11, mitochondrial</fullName>
    </recommendedName>
</protein>
<accession>P19516</accession>
<accession>D6W3N5</accession>
<reference key="1">
    <citation type="journal article" date="1997" name="Nature">
        <title>The nucleotide sequence of Saccharomyces cerevisiae chromosome XVI.</title>
        <authorList>
            <person name="Bussey H."/>
            <person name="Storms R.K."/>
            <person name="Ahmed A."/>
            <person name="Albermann K."/>
            <person name="Allen E."/>
            <person name="Ansorge W."/>
            <person name="Araujo R."/>
            <person name="Aparicio A."/>
            <person name="Barrell B.G."/>
            <person name="Badcock K."/>
            <person name="Benes V."/>
            <person name="Botstein D."/>
            <person name="Bowman S."/>
            <person name="Brueckner M."/>
            <person name="Carpenter J."/>
            <person name="Cherry J.M."/>
            <person name="Chung E."/>
            <person name="Churcher C.M."/>
            <person name="Coster F."/>
            <person name="Davis K."/>
            <person name="Davis R.W."/>
            <person name="Dietrich F.S."/>
            <person name="Delius H."/>
            <person name="DiPaolo T."/>
            <person name="Dubois E."/>
            <person name="Duesterhoeft A."/>
            <person name="Duncan M."/>
            <person name="Floeth M."/>
            <person name="Fortin N."/>
            <person name="Friesen J.D."/>
            <person name="Fritz C."/>
            <person name="Goffeau A."/>
            <person name="Hall J."/>
            <person name="Hebling U."/>
            <person name="Heumann K."/>
            <person name="Hilbert H."/>
            <person name="Hillier L.W."/>
            <person name="Hunicke-Smith S."/>
            <person name="Hyman R.W."/>
            <person name="Johnston M."/>
            <person name="Kalman S."/>
            <person name="Kleine K."/>
            <person name="Komp C."/>
            <person name="Kurdi O."/>
            <person name="Lashkari D."/>
            <person name="Lew H."/>
            <person name="Lin A."/>
            <person name="Lin D."/>
            <person name="Louis E.J."/>
            <person name="Marathe R."/>
            <person name="Messenguy F."/>
            <person name="Mewes H.-W."/>
            <person name="Mirtipati S."/>
            <person name="Moestl D."/>
            <person name="Mueller-Auer S."/>
            <person name="Namath A."/>
            <person name="Nentwich U."/>
            <person name="Oefner P."/>
            <person name="Pearson D."/>
            <person name="Petel F.X."/>
            <person name="Pohl T.M."/>
            <person name="Purnelle B."/>
            <person name="Rajandream M.A."/>
            <person name="Rechmann S."/>
            <person name="Rieger M."/>
            <person name="Riles L."/>
            <person name="Roberts D."/>
            <person name="Schaefer M."/>
            <person name="Scharfe M."/>
            <person name="Scherens B."/>
            <person name="Schramm S."/>
            <person name="Schroeder M."/>
            <person name="Sdicu A.-M."/>
            <person name="Tettelin H."/>
            <person name="Urrestarazu L.A."/>
            <person name="Ushinsky S."/>
            <person name="Vierendeels F."/>
            <person name="Vissers S."/>
            <person name="Voss H."/>
            <person name="Walsh S.V."/>
            <person name="Wambutt R."/>
            <person name="Wang Y."/>
            <person name="Wedler E."/>
            <person name="Wedler H."/>
            <person name="Winnett E."/>
            <person name="Zhong W.-W."/>
            <person name="Zollner A."/>
            <person name="Vo D.H."/>
            <person name="Hani J."/>
        </authorList>
    </citation>
    <scope>NUCLEOTIDE SEQUENCE [LARGE SCALE GENOMIC DNA]</scope>
    <source>
        <strain>ATCC 204508 / S288c</strain>
    </source>
</reference>
<reference key="2">
    <citation type="journal article" date="2014" name="G3 (Bethesda)">
        <title>The reference genome sequence of Saccharomyces cerevisiae: Then and now.</title>
        <authorList>
            <person name="Engel S.R."/>
            <person name="Dietrich F.S."/>
            <person name="Fisk D.G."/>
            <person name="Binkley G."/>
            <person name="Balakrishnan R."/>
            <person name="Costanzo M.C."/>
            <person name="Dwight S.S."/>
            <person name="Hitz B.C."/>
            <person name="Karra K."/>
            <person name="Nash R.S."/>
            <person name="Weng S."/>
            <person name="Wong E.D."/>
            <person name="Lloyd P."/>
            <person name="Skrzypek M.S."/>
            <person name="Miyasato S.R."/>
            <person name="Simison M."/>
            <person name="Cherry J.M."/>
        </authorList>
    </citation>
    <scope>GENOME REANNOTATION</scope>
    <source>
        <strain>ATCC 204508 / S288c</strain>
    </source>
</reference>
<reference key="3">
    <citation type="journal article" date="1990" name="EMBO J.">
        <title>Cytochrome oxidase assembly in yeast requires the product of COX11, a homolog of the P. denitrificans protein encoded by ORF3.</title>
        <authorList>
            <person name="Tzagoloff A."/>
            <person name="Capitanio N."/>
            <person name="Nobrega M.P."/>
            <person name="Gatti D."/>
        </authorList>
    </citation>
    <scope>NUCLEOTIDE SEQUENCE [GENOMIC DNA] OF 24-300</scope>
</reference>
<reference key="4">
    <citation type="journal article" date="1992" name="J. Biol. Chem.">
        <title>Unbalanced regulation of the ribosomal 5 S RNA-binding protein in Saccharomyces cerevisiae expressing mutant 5 S rRNAs.</title>
        <authorList>
            <person name="Tang B."/>
            <person name="Nazar R.N."/>
        </authorList>
    </citation>
    <scope>NUCLEOTIDE SEQUENCE [GENOMIC DNA] OF 141-300</scope>
    <source>
        <strain>ATCC 204508 / S288c</strain>
    </source>
</reference>
<reference key="5">
    <citation type="journal article" date="2012" name="Mol. Cell. Proteomics">
        <title>Intermembrane space proteome of yeast mitochondria.</title>
        <authorList>
            <person name="Voegtle F.N."/>
            <person name="Burkhart J.M."/>
            <person name="Rao S."/>
            <person name="Gerbeth C."/>
            <person name="Hinrichs J."/>
            <person name="Martinou J.C."/>
            <person name="Chacinska A."/>
            <person name="Sickmann A."/>
            <person name="Zahedi R.P."/>
            <person name="Meisinger C."/>
        </authorList>
    </citation>
    <scope>IDENTIFICATION BY MASS SPECTROMETRY</scope>
    <scope>SUBCELLULAR LOCATION [LARGE SCALE ANALYSIS]</scope>
</reference>
<organism>
    <name type="scientific">Saccharomyces cerevisiae (strain ATCC 204508 / S288c)</name>
    <name type="common">Baker's yeast</name>
    <dbReference type="NCBI Taxonomy" id="559292"/>
    <lineage>
        <taxon>Eukaryota</taxon>
        <taxon>Fungi</taxon>
        <taxon>Dikarya</taxon>
        <taxon>Ascomycota</taxon>
        <taxon>Saccharomycotina</taxon>
        <taxon>Saccharomycetes</taxon>
        <taxon>Saccharomycetales</taxon>
        <taxon>Saccharomycetaceae</taxon>
        <taxon>Saccharomyces</taxon>
    </lineage>
</organism>
<keyword id="KW-0186">Copper</keyword>
<keyword id="KW-0472">Membrane</keyword>
<keyword id="KW-0496">Mitochondrion</keyword>
<keyword id="KW-0999">Mitochondrion inner membrane</keyword>
<keyword id="KW-1185">Reference proteome</keyword>
<keyword id="KW-0809">Transit peptide</keyword>
<keyword id="KW-0812">Transmembrane</keyword>
<keyword id="KW-1133">Transmembrane helix</keyword>
<proteinExistence type="evidence at protein level"/>